<reference key="1">
    <citation type="journal article" date="2009" name="Science">
        <title>The dynamics and time scale of ongoing genomic erosion in symbiotic bacteria.</title>
        <authorList>
            <person name="Moran N.A."/>
            <person name="McLaughlin H.J."/>
            <person name="Sorek R."/>
        </authorList>
    </citation>
    <scope>NUCLEOTIDE SEQUENCE [LARGE SCALE GENOMIC DNA]</scope>
    <source>
        <strain>Tuc7</strain>
    </source>
</reference>
<comment type="function">
    <text evidence="1">Catalyzes the GTP-dependent ribosomal translocation step during translation elongation. During this step, the ribosome changes from the pre-translocational (PRE) to the post-translocational (POST) state as the newly formed A-site-bound peptidyl-tRNA and P-site-bound deacylated tRNA move to the P and E sites, respectively. Catalyzes the coordinated movement of the two tRNA molecules, the mRNA and conformational changes in the ribosome.</text>
</comment>
<comment type="subcellular location">
    <subcellularLocation>
        <location evidence="1">Cytoplasm</location>
    </subcellularLocation>
</comment>
<comment type="similarity">
    <text evidence="1">Belongs to the TRAFAC class translation factor GTPase superfamily. Classic translation factor GTPase family. EF-G/EF-2 subfamily.</text>
</comment>
<feature type="chain" id="PRO_1000201444" description="Elongation factor G">
    <location>
        <begin position="1"/>
        <end position="702"/>
    </location>
</feature>
<feature type="domain" description="tr-type G">
    <location>
        <begin position="8"/>
        <end position="290"/>
    </location>
</feature>
<feature type="binding site" evidence="1">
    <location>
        <begin position="17"/>
        <end position="24"/>
    </location>
    <ligand>
        <name>GTP</name>
        <dbReference type="ChEBI" id="CHEBI:37565"/>
    </ligand>
</feature>
<feature type="binding site" evidence="1">
    <location>
        <begin position="88"/>
        <end position="92"/>
    </location>
    <ligand>
        <name>GTP</name>
        <dbReference type="ChEBI" id="CHEBI:37565"/>
    </ligand>
</feature>
<feature type="binding site" evidence="1">
    <location>
        <begin position="142"/>
        <end position="145"/>
    </location>
    <ligand>
        <name>GTP</name>
        <dbReference type="ChEBI" id="CHEBI:37565"/>
    </ligand>
</feature>
<accession>B8D852</accession>
<gene>
    <name evidence="1" type="primary">fusA</name>
    <name type="ordered locus">BUAPTUC7_521</name>
</gene>
<dbReference type="EMBL" id="CP001158">
    <property type="protein sequence ID" value="ACL30317.1"/>
    <property type="molecule type" value="Genomic_DNA"/>
</dbReference>
<dbReference type="RefSeq" id="WP_009874478.1">
    <property type="nucleotide sequence ID" value="NC_011834.1"/>
</dbReference>
<dbReference type="SMR" id="B8D852"/>
<dbReference type="KEGG" id="bau:BUAPTUC7_521"/>
<dbReference type="HOGENOM" id="CLU_002794_4_1_6"/>
<dbReference type="GO" id="GO:0005737">
    <property type="term" value="C:cytoplasm"/>
    <property type="evidence" value="ECO:0007669"/>
    <property type="project" value="UniProtKB-SubCell"/>
</dbReference>
<dbReference type="GO" id="GO:0005525">
    <property type="term" value="F:GTP binding"/>
    <property type="evidence" value="ECO:0007669"/>
    <property type="project" value="UniProtKB-UniRule"/>
</dbReference>
<dbReference type="GO" id="GO:0003924">
    <property type="term" value="F:GTPase activity"/>
    <property type="evidence" value="ECO:0007669"/>
    <property type="project" value="InterPro"/>
</dbReference>
<dbReference type="GO" id="GO:0097216">
    <property type="term" value="F:guanosine tetraphosphate binding"/>
    <property type="evidence" value="ECO:0007669"/>
    <property type="project" value="UniProtKB-ARBA"/>
</dbReference>
<dbReference type="GO" id="GO:0003746">
    <property type="term" value="F:translation elongation factor activity"/>
    <property type="evidence" value="ECO:0007669"/>
    <property type="project" value="UniProtKB-UniRule"/>
</dbReference>
<dbReference type="GO" id="GO:0032790">
    <property type="term" value="P:ribosome disassembly"/>
    <property type="evidence" value="ECO:0007669"/>
    <property type="project" value="TreeGrafter"/>
</dbReference>
<dbReference type="CDD" id="cd01886">
    <property type="entry name" value="EF-G"/>
    <property type="match status" value="1"/>
</dbReference>
<dbReference type="CDD" id="cd16262">
    <property type="entry name" value="EFG_III"/>
    <property type="match status" value="1"/>
</dbReference>
<dbReference type="CDD" id="cd01434">
    <property type="entry name" value="EFG_mtEFG1_IV"/>
    <property type="match status" value="1"/>
</dbReference>
<dbReference type="CDD" id="cd03713">
    <property type="entry name" value="EFG_mtEFG_C"/>
    <property type="match status" value="1"/>
</dbReference>
<dbReference type="CDD" id="cd04088">
    <property type="entry name" value="EFG_mtEFG_II"/>
    <property type="match status" value="1"/>
</dbReference>
<dbReference type="FunFam" id="2.40.30.10:FF:000006">
    <property type="entry name" value="Elongation factor G"/>
    <property type="match status" value="1"/>
</dbReference>
<dbReference type="FunFam" id="3.30.230.10:FF:000003">
    <property type="entry name" value="Elongation factor G"/>
    <property type="match status" value="1"/>
</dbReference>
<dbReference type="FunFam" id="3.30.70.240:FF:000001">
    <property type="entry name" value="Elongation factor G"/>
    <property type="match status" value="1"/>
</dbReference>
<dbReference type="FunFam" id="3.30.70.870:FF:000001">
    <property type="entry name" value="Elongation factor G"/>
    <property type="match status" value="1"/>
</dbReference>
<dbReference type="FunFam" id="3.40.50.300:FF:000029">
    <property type="entry name" value="Elongation factor G"/>
    <property type="match status" value="1"/>
</dbReference>
<dbReference type="Gene3D" id="3.30.230.10">
    <property type="match status" value="1"/>
</dbReference>
<dbReference type="Gene3D" id="3.30.70.240">
    <property type="match status" value="1"/>
</dbReference>
<dbReference type="Gene3D" id="3.30.70.870">
    <property type="entry name" value="Elongation Factor G (Translational Gtpase), domain 3"/>
    <property type="match status" value="1"/>
</dbReference>
<dbReference type="Gene3D" id="3.40.50.300">
    <property type="entry name" value="P-loop containing nucleotide triphosphate hydrolases"/>
    <property type="match status" value="1"/>
</dbReference>
<dbReference type="Gene3D" id="2.40.30.10">
    <property type="entry name" value="Translation factors"/>
    <property type="match status" value="1"/>
</dbReference>
<dbReference type="HAMAP" id="MF_00054_B">
    <property type="entry name" value="EF_G_EF_2_B"/>
    <property type="match status" value="1"/>
</dbReference>
<dbReference type="InterPro" id="IPR041095">
    <property type="entry name" value="EFG_II"/>
</dbReference>
<dbReference type="InterPro" id="IPR009022">
    <property type="entry name" value="EFG_III"/>
</dbReference>
<dbReference type="InterPro" id="IPR035647">
    <property type="entry name" value="EFG_III/V"/>
</dbReference>
<dbReference type="InterPro" id="IPR047872">
    <property type="entry name" value="EFG_IV"/>
</dbReference>
<dbReference type="InterPro" id="IPR035649">
    <property type="entry name" value="EFG_V"/>
</dbReference>
<dbReference type="InterPro" id="IPR000640">
    <property type="entry name" value="EFG_V-like"/>
</dbReference>
<dbReference type="InterPro" id="IPR004161">
    <property type="entry name" value="EFTu-like_2"/>
</dbReference>
<dbReference type="InterPro" id="IPR031157">
    <property type="entry name" value="G_TR_CS"/>
</dbReference>
<dbReference type="InterPro" id="IPR027417">
    <property type="entry name" value="P-loop_NTPase"/>
</dbReference>
<dbReference type="InterPro" id="IPR020568">
    <property type="entry name" value="Ribosomal_Su5_D2-typ_SF"/>
</dbReference>
<dbReference type="InterPro" id="IPR014721">
    <property type="entry name" value="Ribsml_uS5_D2-typ_fold_subgr"/>
</dbReference>
<dbReference type="InterPro" id="IPR005225">
    <property type="entry name" value="Small_GTP-bd"/>
</dbReference>
<dbReference type="InterPro" id="IPR000795">
    <property type="entry name" value="T_Tr_GTP-bd_dom"/>
</dbReference>
<dbReference type="InterPro" id="IPR009000">
    <property type="entry name" value="Transl_B-barrel_sf"/>
</dbReference>
<dbReference type="InterPro" id="IPR004540">
    <property type="entry name" value="Transl_elong_EFG/EF2"/>
</dbReference>
<dbReference type="InterPro" id="IPR005517">
    <property type="entry name" value="Transl_elong_EFG/EF2_IV"/>
</dbReference>
<dbReference type="NCBIfam" id="TIGR00484">
    <property type="entry name" value="EF-G"/>
    <property type="match status" value="1"/>
</dbReference>
<dbReference type="NCBIfam" id="NF009381">
    <property type="entry name" value="PRK12740.1-5"/>
    <property type="match status" value="1"/>
</dbReference>
<dbReference type="NCBIfam" id="TIGR00231">
    <property type="entry name" value="small_GTP"/>
    <property type="match status" value="1"/>
</dbReference>
<dbReference type="PANTHER" id="PTHR43261:SF1">
    <property type="entry name" value="RIBOSOME-RELEASING FACTOR 2, MITOCHONDRIAL"/>
    <property type="match status" value="1"/>
</dbReference>
<dbReference type="PANTHER" id="PTHR43261">
    <property type="entry name" value="TRANSLATION ELONGATION FACTOR G-RELATED"/>
    <property type="match status" value="1"/>
</dbReference>
<dbReference type="Pfam" id="PF00679">
    <property type="entry name" value="EFG_C"/>
    <property type="match status" value="1"/>
</dbReference>
<dbReference type="Pfam" id="PF14492">
    <property type="entry name" value="EFG_III"/>
    <property type="match status" value="1"/>
</dbReference>
<dbReference type="Pfam" id="PF03764">
    <property type="entry name" value="EFG_IV"/>
    <property type="match status" value="1"/>
</dbReference>
<dbReference type="Pfam" id="PF00009">
    <property type="entry name" value="GTP_EFTU"/>
    <property type="match status" value="1"/>
</dbReference>
<dbReference type="Pfam" id="PF03144">
    <property type="entry name" value="GTP_EFTU_D2"/>
    <property type="match status" value="1"/>
</dbReference>
<dbReference type="PRINTS" id="PR00315">
    <property type="entry name" value="ELONGATNFCT"/>
</dbReference>
<dbReference type="SMART" id="SM00838">
    <property type="entry name" value="EFG_C"/>
    <property type="match status" value="1"/>
</dbReference>
<dbReference type="SMART" id="SM00889">
    <property type="entry name" value="EFG_IV"/>
    <property type="match status" value="1"/>
</dbReference>
<dbReference type="SUPFAM" id="SSF54980">
    <property type="entry name" value="EF-G C-terminal domain-like"/>
    <property type="match status" value="2"/>
</dbReference>
<dbReference type="SUPFAM" id="SSF52540">
    <property type="entry name" value="P-loop containing nucleoside triphosphate hydrolases"/>
    <property type="match status" value="1"/>
</dbReference>
<dbReference type="SUPFAM" id="SSF54211">
    <property type="entry name" value="Ribosomal protein S5 domain 2-like"/>
    <property type="match status" value="1"/>
</dbReference>
<dbReference type="SUPFAM" id="SSF50447">
    <property type="entry name" value="Translation proteins"/>
    <property type="match status" value="1"/>
</dbReference>
<dbReference type="PROSITE" id="PS00301">
    <property type="entry name" value="G_TR_1"/>
    <property type="match status" value="1"/>
</dbReference>
<dbReference type="PROSITE" id="PS51722">
    <property type="entry name" value="G_TR_2"/>
    <property type="match status" value="1"/>
</dbReference>
<protein>
    <recommendedName>
        <fullName evidence="1">Elongation factor G</fullName>
        <shortName evidence="1">EF-G</shortName>
    </recommendedName>
</protein>
<evidence type="ECO:0000255" key="1">
    <source>
        <dbReference type="HAMAP-Rule" id="MF_00054"/>
    </source>
</evidence>
<proteinExistence type="inferred from homology"/>
<name>EFG_BUCAT</name>
<sequence length="702" mass="78183">MSRTTPISRYRNIGISAHIDAGKTTTTERILFYTGINHKIGEVHDGAATMDWMEQEQERGITITSAATTTFWSGMAKQFKPHRINIIDTPGHVDFTIEVERSMRVLDGAVMVYCAVGGVQPQSETVWRQANKYNVPRIAFVNKMDRMGANFLKVVKQIKIRLGANPVPLQLAIGAEDTFVGVVDLIKMKAVHWKDSDQGVTFVYNDIPPEMIELSKKWNQNLIESAVESNEDLLEKYLNGDRLSESEIKSALRKRALNNEIVLITCGSAFKNKGVQALLDAIIEFLPAPNDIQDIKGILNDVEQTPAIRNSDDKAPFSALAFKIASDPFVGNLTFFRVYSGVVKSGDTVFNSAKSQRERFGRIVQMHANKREEIKEVYAGDIAAAIGLKDVTTGDTLCDLNDPIILERMEFPEPVISISVEPKTKVDQEKMGLALGRLAKEDPSFRVRTDQESNQTIISGMGELHLEIIIDRMKREFSVDANVGKPQVAYRETILNKVEDIEGKHIKQSGGRGQYGHVVIELFPLQPGGEGYLFVNDIKGGVIPSEYISAIDKGIQEQLKCGPLAGYPVVDIGVRLYFGSYHDVDSSELAFKLAASAAFKKGFKQAKPILLEPIMKVEVETPDDYMGDVIGDLNRRRGIIEGMKDLSISKIINACVPLSEMFGYATDLRSQTQGRASYSMEFLKYIEAPFNISKDIIERREK</sequence>
<organism>
    <name type="scientific">Buchnera aphidicola subsp. Acyrthosiphon pisum (strain Tuc7)</name>
    <dbReference type="NCBI Taxonomy" id="561501"/>
    <lineage>
        <taxon>Bacteria</taxon>
        <taxon>Pseudomonadati</taxon>
        <taxon>Pseudomonadota</taxon>
        <taxon>Gammaproteobacteria</taxon>
        <taxon>Enterobacterales</taxon>
        <taxon>Erwiniaceae</taxon>
        <taxon>Buchnera</taxon>
    </lineage>
</organism>
<keyword id="KW-0963">Cytoplasm</keyword>
<keyword id="KW-0251">Elongation factor</keyword>
<keyword id="KW-0342">GTP-binding</keyword>
<keyword id="KW-0547">Nucleotide-binding</keyword>
<keyword id="KW-0648">Protein biosynthesis</keyword>